<evidence type="ECO:0007829" key="1">
    <source>
        <dbReference type="PDB" id="1GKS"/>
    </source>
</evidence>
<accession>P00122</accession>
<feature type="chain" id="PRO_0000108392" description="Cytochrome c-551">
    <location>
        <begin position="1"/>
        <end position="78"/>
    </location>
</feature>
<feature type="binding site" description="covalent">
    <location>
        <position position="14"/>
    </location>
    <ligand>
        <name>heme c</name>
        <dbReference type="ChEBI" id="CHEBI:61717"/>
    </ligand>
</feature>
<feature type="binding site" description="covalent">
    <location>
        <position position="17"/>
    </location>
    <ligand>
        <name>heme c</name>
        <dbReference type="ChEBI" id="CHEBI:61717"/>
    </ligand>
</feature>
<feature type="binding site" description="axial binding residue">
    <location>
        <position position="18"/>
    </location>
    <ligand>
        <name>heme c</name>
        <dbReference type="ChEBI" id="CHEBI:61717"/>
    </ligand>
    <ligandPart>
        <name>Fe</name>
        <dbReference type="ChEBI" id="CHEBI:18248"/>
    </ligandPart>
</feature>
<feature type="binding site" description="axial binding residue">
    <location>
        <position position="55"/>
    </location>
    <ligand>
        <name>heme c</name>
        <dbReference type="ChEBI" id="CHEBI:61717"/>
    </ligand>
    <ligandPart>
        <name>Fe</name>
        <dbReference type="ChEBI" id="CHEBI:18248"/>
    </ligandPart>
</feature>
<feature type="helix" evidence="1">
    <location>
        <begin position="2"/>
        <end position="7"/>
    </location>
</feature>
<feature type="strand" evidence="1">
    <location>
        <begin position="9"/>
        <end position="12"/>
    </location>
</feature>
<feature type="helix" evidence="1">
    <location>
        <begin position="15"/>
        <end position="18"/>
    </location>
</feature>
<feature type="turn" evidence="1">
    <location>
        <begin position="19"/>
        <end position="21"/>
    </location>
</feature>
<feature type="helix" evidence="1">
    <location>
        <begin position="22"/>
        <end position="24"/>
    </location>
</feature>
<feature type="helix" evidence="1">
    <location>
        <begin position="31"/>
        <end position="35"/>
    </location>
</feature>
<feature type="helix" evidence="1">
    <location>
        <begin position="41"/>
        <end position="50"/>
    </location>
</feature>
<feature type="helix" evidence="1">
    <location>
        <begin position="64"/>
        <end position="75"/>
    </location>
</feature>
<sequence length="78" mass="8258">DGESIYINGTAPTCSSCHDRGVAGAPELNAPEDWADRPSSVDELVESTLAGKGAMPAYDGRADREDLVKAIEYMLSTL</sequence>
<protein>
    <recommendedName>
        <fullName>Cytochrome c-551</fullName>
    </recommendedName>
    <alternativeName>
        <fullName>Cytochrome c551</fullName>
    </alternativeName>
</protein>
<proteinExistence type="evidence at protein level"/>
<organism>
    <name type="scientific">Halorhodospira halophila</name>
    <name type="common">Ectothiorhodospira halophila</name>
    <dbReference type="NCBI Taxonomy" id="1053"/>
    <lineage>
        <taxon>Bacteria</taxon>
        <taxon>Pseudomonadati</taxon>
        <taxon>Pseudomonadota</taxon>
        <taxon>Gammaproteobacteria</taxon>
        <taxon>Chromatiales</taxon>
        <taxon>Ectothiorhodospiraceae</taxon>
        <taxon>Halorhodospira</taxon>
    </lineage>
</organism>
<keyword id="KW-0002">3D-structure</keyword>
<keyword id="KW-0903">Direct protein sequencing</keyword>
<keyword id="KW-0249">Electron transport</keyword>
<keyword id="KW-0349">Heme</keyword>
<keyword id="KW-0408">Iron</keyword>
<keyword id="KW-0479">Metal-binding</keyword>
<keyword id="KW-0813">Transport</keyword>
<reference key="1">
    <citation type="journal article" date="1993" name="Arch. Biochem. Biophys.">
        <title>Amino acid sequences of cytochromes c-551 from the halophilic purple phototrophic bacteria, Ectothiorhodospira halophila and E. halochloris.</title>
        <authorList>
            <person name="Ambler R.P."/>
            <person name="Meyer T.E."/>
            <person name="Kamen M.D."/>
        </authorList>
    </citation>
    <scope>PROTEIN SEQUENCE</scope>
    <source>
        <strain>BN9626</strain>
    </source>
</reference>
<reference key="2">
    <citation type="journal article" date="1996" name="J. Mol. Biol.">
        <title>Ectothiorhodospira halophila ferrocytochrome c551: solution structure and comparison with bacterial cytochromes c.</title>
        <authorList>
            <person name="Bersch B."/>
            <person name="Blackledge M.J."/>
            <person name="Meyer T.E."/>
            <person name="Marion D."/>
        </authorList>
    </citation>
    <scope>STRUCTURE BY NMR</scope>
    <source>
        <strain>BN9626</strain>
    </source>
</reference>
<comment type="biophysicochemical properties">
    <redoxPotential>
        <text>E(0) is about +58 mV.</text>
    </redoxPotential>
</comment>
<comment type="PTM">
    <text>Binds 1 heme c group covalently per subunit.</text>
</comment>
<dbReference type="PIR" id="S38755">
    <property type="entry name" value="CCER51"/>
</dbReference>
<dbReference type="PDB" id="1GKS">
    <property type="method" value="NMR"/>
    <property type="chains" value="A=1-78"/>
</dbReference>
<dbReference type="PDBsum" id="1GKS"/>
<dbReference type="SMR" id="P00122"/>
<dbReference type="EvolutionaryTrace" id="P00122"/>
<dbReference type="GO" id="GO:0009055">
    <property type="term" value="F:electron transfer activity"/>
    <property type="evidence" value="ECO:0007669"/>
    <property type="project" value="InterPro"/>
</dbReference>
<dbReference type="GO" id="GO:0020037">
    <property type="term" value="F:heme binding"/>
    <property type="evidence" value="ECO:0007669"/>
    <property type="project" value="InterPro"/>
</dbReference>
<dbReference type="GO" id="GO:0005506">
    <property type="term" value="F:iron ion binding"/>
    <property type="evidence" value="ECO:0007669"/>
    <property type="project" value="InterPro"/>
</dbReference>
<dbReference type="Gene3D" id="1.10.760.10">
    <property type="entry name" value="Cytochrome c-like domain"/>
    <property type="match status" value="1"/>
</dbReference>
<dbReference type="InterPro" id="IPR009056">
    <property type="entry name" value="Cyt_c-like_dom"/>
</dbReference>
<dbReference type="InterPro" id="IPR036909">
    <property type="entry name" value="Cyt_c-like_dom_sf"/>
</dbReference>
<dbReference type="InterPro" id="IPR002323">
    <property type="entry name" value="Cyt_CIE"/>
</dbReference>
<dbReference type="Pfam" id="PF13442">
    <property type="entry name" value="Cytochrome_CBB3"/>
    <property type="match status" value="1"/>
</dbReference>
<dbReference type="PRINTS" id="PR00607">
    <property type="entry name" value="CYTCHROMECIE"/>
</dbReference>
<dbReference type="SUPFAM" id="SSF46626">
    <property type="entry name" value="Cytochrome c"/>
    <property type="match status" value="1"/>
</dbReference>
<dbReference type="PROSITE" id="PS51007">
    <property type="entry name" value="CYTC"/>
    <property type="match status" value="1"/>
</dbReference>
<name>CY551_HALHA</name>